<name>RLMH_FRATF</name>
<sequence length="166" mass="19187">MMAFLLDIITFLQISFSTNIFRINYKWVSDGYDEYKKRLSKLIPLELIELPIAKRTKTGNPKLWMEQEAKTILGKLNDSDHLVILDVNSKIISTEELADKMQNWKFNNPNVVILIGGPDGIDQSIKDIAKEKISISKMTFPHPLVRIIAEQLYRAYTILEGHPYHK</sequence>
<organism>
    <name type="scientific">Francisella tularensis subsp. holarctica (strain FTNF002-00 / FTA)</name>
    <dbReference type="NCBI Taxonomy" id="458234"/>
    <lineage>
        <taxon>Bacteria</taxon>
        <taxon>Pseudomonadati</taxon>
        <taxon>Pseudomonadota</taxon>
        <taxon>Gammaproteobacteria</taxon>
        <taxon>Thiotrichales</taxon>
        <taxon>Francisellaceae</taxon>
        <taxon>Francisella</taxon>
    </lineage>
</organism>
<protein>
    <recommendedName>
        <fullName evidence="1">Ribosomal RNA large subunit methyltransferase H</fullName>
        <ecNumber evidence="1">2.1.1.177</ecNumber>
    </recommendedName>
    <alternativeName>
        <fullName evidence="1">23S rRNA (pseudouridine1915-N3)-methyltransferase</fullName>
    </alternativeName>
    <alternativeName>
        <fullName evidence="1">23S rRNA m3Psi1915 methyltransferase</fullName>
    </alternativeName>
    <alternativeName>
        <fullName evidence="1">rRNA (pseudouridine-N3-)-methyltransferase RlmH</fullName>
    </alternativeName>
</protein>
<keyword id="KW-0963">Cytoplasm</keyword>
<keyword id="KW-0489">Methyltransferase</keyword>
<keyword id="KW-0698">rRNA processing</keyword>
<keyword id="KW-0949">S-adenosyl-L-methionine</keyword>
<keyword id="KW-0808">Transferase</keyword>
<evidence type="ECO:0000255" key="1">
    <source>
        <dbReference type="HAMAP-Rule" id="MF_00658"/>
    </source>
</evidence>
<comment type="function">
    <text evidence="1">Specifically methylates the pseudouridine at position 1915 (m3Psi1915) in 23S rRNA.</text>
</comment>
<comment type="catalytic activity">
    <reaction evidence="1">
        <text>pseudouridine(1915) in 23S rRNA + S-adenosyl-L-methionine = N(3)-methylpseudouridine(1915) in 23S rRNA + S-adenosyl-L-homocysteine + H(+)</text>
        <dbReference type="Rhea" id="RHEA:42752"/>
        <dbReference type="Rhea" id="RHEA-COMP:10221"/>
        <dbReference type="Rhea" id="RHEA-COMP:10222"/>
        <dbReference type="ChEBI" id="CHEBI:15378"/>
        <dbReference type="ChEBI" id="CHEBI:57856"/>
        <dbReference type="ChEBI" id="CHEBI:59789"/>
        <dbReference type="ChEBI" id="CHEBI:65314"/>
        <dbReference type="ChEBI" id="CHEBI:74486"/>
        <dbReference type="EC" id="2.1.1.177"/>
    </reaction>
</comment>
<comment type="subunit">
    <text evidence="1">Homodimer.</text>
</comment>
<comment type="subcellular location">
    <subcellularLocation>
        <location evidence="1">Cytoplasm</location>
    </subcellularLocation>
</comment>
<comment type="similarity">
    <text evidence="1">Belongs to the RNA methyltransferase RlmH family.</text>
</comment>
<feature type="chain" id="PRO_0000366598" description="Ribosomal RNA large subunit methyltransferase H">
    <location>
        <begin position="1"/>
        <end position="166"/>
    </location>
</feature>
<feature type="binding site" evidence="1">
    <location>
        <position position="85"/>
    </location>
    <ligand>
        <name>S-adenosyl-L-methionine</name>
        <dbReference type="ChEBI" id="CHEBI:59789"/>
    </ligand>
</feature>
<feature type="binding site" evidence="1">
    <location>
        <position position="116"/>
    </location>
    <ligand>
        <name>S-adenosyl-L-methionine</name>
        <dbReference type="ChEBI" id="CHEBI:59789"/>
    </ligand>
</feature>
<feature type="binding site" evidence="1">
    <location>
        <begin position="135"/>
        <end position="140"/>
    </location>
    <ligand>
        <name>S-adenosyl-L-methionine</name>
        <dbReference type="ChEBI" id="CHEBI:59789"/>
    </ligand>
</feature>
<reference key="1">
    <citation type="journal article" date="2009" name="PLoS ONE">
        <title>Complete genome sequence of Francisella tularensis subspecies holarctica FTNF002-00.</title>
        <authorList>
            <person name="Barabote R.D."/>
            <person name="Xie G."/>
            <person name="Brettin T.S."/>
            <person name="Hinrichs S.H."/>
            <person name="Fey P.D."/>
            <person name="Jay J.J."/>
            <person name="Engle J.L."/>
            <person name="Godbole S.D."/>
            <person name="Noronha J.M."/>
            <person name="Scheuermann R.H."/>
            <person name="Zhou L.W."/>
            <person name="Lion C."/>
            <person name="Dempsey M.P."/>
        </authorList>
    </citation>
    <scope>NUCLEOTIDE SEQUENCE [LARGE SCALE GENOMIC DNA]</scope>
    <source>
        <strain>FTNF002-00 / FTA</strain>
    </source>
</reference>
<dbReference type="EC" id="2.1.1.177" evidence="1"/>
<dbReference type="EMBL" id="CP000803">
    <property type="protein sequence ID" value="ABU62298.2"/>
    <property type="molecule type" value="Genomic_DNA"/>
</dbReference>
<dbReference type="SMR" id="A7NE94"/>
<dbReference type="KEGG" id="fta:FTA_1823"/>
<dbReference type="HOGENOM" id="CLU_100552_1_0_6"/>
<dbReference type="GO" id="GO:0005737">
    <property type="term" value="C:cytoplasm"/>
    <property type="evidence" value="ECO:0007669"/>
    <property type="project" value="UniProtKB-SubCell"/>
</dbReference>
<dbReference type="GO" id="GO:0070038">
    <property type="term" value="F:rRNA (pseudouridine-N3-)-methyltransferase activity"/>
    <property type="evidence" value="ECO:0007669"/>
    <property type="project" value="UniProtKB-UniRule"/>
</dbReference>
<dbReference type="CDD" id="cd18081">
    <property type="entry name" value="RlmH-like"/>
    <property type="match status" value="1"/>
</dbReference>
<dbReference type="Gene3D" id="3.40.1280.10">
    <property type="match status" value="1"/>
</dbReference>
<dbReference type="HAMAP" id="MF_00658">
    <property type="entry name" value="23SrRNA_methyltr_H"/>
    <property type="match status" value="1"/>
</dbReference>
<dbReference type="InterPro" id="IPR029028">
    <property type="entry name" value="Alpha/beta_knot_MTases"/>
</dbReference>
<dbReference type="InterPro" id="IPR003742">
    <property type="entry name" value="RlmH-like"/>
</dbReference>
<dbReference type="InterPro" id="IPR029026">
    <property type="entry name" value="tRNA_m1G_MTases_N"/>
</dbReference>
<dbReference type="NCBIfam" id="NF000986">
    <property type="entry name" value="PRK00103.1-4"/>
    <property type="match status" value="1"/>
</dbReference>
<dbReference type="PANTHER" id="PTHR33603">
    <property type="entry name" value="METHYLTRANSFERASE"/>
    <property type="match status" value="1"/>
</dbReference>
<dbReference type="PANTHER" id="PTHR33603:SF1">
    <property type="entry name" value="RIBOSOMAL RNA LARGE SUBUNIT METHYLTRANSFERASE H"/>
    <property type="match status" value="1"/>
</dbReference>
<dbReference type="Pfam" id="PF02590">
    <property type="entry name" value="SPOUT_MTase"/>
    <property type="match status" value="1"/>
</dbReference>
<dbReference type="PIRSF" id="PIRSF004505">
    <property type="entry name" value="MT_bac"/>
    <property type="match status" value="1"/>
</dbReference>
<dbReference type="SUPFAM" id="SSF75217">
    <property type="entry name" value="alpha/beta knot"/>
    <property type="match status" value="1"/>
</dbReference>
<gene>
    <name evidence="1" type="primary">rlmH</name>
    <name type="ordered locus">FTA_1823</name>
</gene>
<proteinExistence type="inferred from homology"/>
<accession>A7NE94</accession>